<gene>
    <name type="ordered locus">BQ2027_MB2919C</name>
</gene>
<sequence>MAGRPLHAFEVVATRHLAPHMVRVVLGGSGFDTFVPSDFTDSYIKLVFVDDDVDVGRLPRPLTLDSFADLPTAKRPPVRTMTVRHVDAAAREIAVDIVLHGEHGVAGPWAAGAQRGQPIYLMGPGGAYAPDPAADWHLLAGDESAIPAIAAALEALPPDAIGRAFIEVAGPDDEIGLTAPDAVEVNWVYRGGRADLVPEDRAGDHAPLIEAVTTTAWLPGQVHVFIHGEAQAVMHNLRPYVRNERGVDAKWASSISGYWRRGRTEEMFRKWKKELAEAEAGTH</sequence>
<feature type="chain" id="PRO_0000104094" description="Uncharacterized protein Mb2919c">
    <location>
        <begin position="1"/>
        <end position="283"/>
    </location>
</feature>
<feature type="domain" description="FAD-binding FR-type" evidence="1">
    <location>
        <begin position="4"/>
        <end position="131"/>
    </location>
</feature>
<accession>P65050</accession>
<accession>A0A1R3Y2I2</accession>
<accession>Q10816</accession>
<accession>X2BMQ4</accession>
<keyword id="KW-1185">Reference proteome</keyword>
<dbReference type="EMBL" id="LT708304">
    <property type="protein sequence ID" value="SIU01540.1"/>
    <property type="molecule type" value="Genomic_DNA"/>
</dbReference>
<dbReference type="RefSeq" id="NP_856564.1">
    <property type="nucleotide sequence ID" value="NC_002945.3"/>
</dbReference>
<dbReference type="RefSeq" id="WP_003900590.1">
    <property type="nucleotide sequence ID" value="NC_002945.4"/>
</dbReference>
<dbReference type="SMR" id="P65050"/>
<dbReference type="KEGG" id="mbo:BQ2027_MB2919C"/>
<dbReference type="PATRIC" id="fig|233413.5.peg.3205"/>
<dbReference type="Proteomes" id="UP000001419">
    <property type="component" value="Chromosome"/>
</dbReference>
<dbReference type="GO" id="GO:0016491">
    <property type="term" value="F:oxidoreductase activity"/>
    <property type="evidence" value="ECO:0007669"/>
    <property type="project" value="InterPro"/>
</dbReference>
<dbReference type="CDD" id="cd06193">
    <property type="entry name" value="siderophore_interacting"/>
    <property type="match status" value="1"/>
</dbReference>
<dbReference type="FunFam" id="3.40.50.80:FF:000038">
    <property type="entry name" value="Vibriobactin utilization protein ViuB"/>
    <property type="match status" value="1"/>
</dbReference>
<dbReference type="Gene3D" id="3.40.50.80">
    <property type="entry name" value="Nucleotide-binding domain of ferredoxin-NADP reductase (FNR) module"/>
    <property type="match status" value="1"/>
</dbReference>
<dbReference type="Gene3D" id="2.40.30.10">
    <property type="entry name" value="Translation factors"/>
    <property type="match status" value="1"/>
</dbReference>
<dbReference type="InterPro" id="IPR013113">
    <property type="entry name" value="FAD-bd_9_SIP"/>
</dbReference>
<dbReference type="InterPro" id="IPR017927">
    <property type="entry name" value="FAD-bd_FR_type"/>
</dbReference>
<dbReference type="InterPro" id="IPR039261">
    <property type="entry name" value="FNR_nucleotide-bd"/>
</dbReference>
<dbReference type="InterPro" id="IPR017938">
    <property type="entry name" value="Riboflavin_synthase-like_b-brl"/>
</dbReference>
<dbReference type="InterPro" id="IPR007037">
    <property type="entry name" value="SIP_C"/>
</dbReference>
<dbReference type="InterPro" id="IPR039374">
    <property type="entry name" value="SIP_fam"/>
</dbReference>
<dbReference type="PANTHER" id="PTHR30157">
    <property type="entry name" value="FERRIC REDUCTASE, NADPH-DEPENDENT"/>
    <property type="match status" value="1"/>
</dbReference>
<dbReference type="PANTHER" id="PTHR30157:SF0">
    <property type="entry name" value="NADPH-DEPENDENT FERRIC-CHELATE REDUCTASE"/>
    <property type="match status" value="1"/>
</dbReference>
<dbReference type="Pfam" id="PF08021">
    <property type="entry name" value="FAD_binding_9"/>
    <property type="match status" value="1"/>
</dbReference>
<dbReference type="Pfam" id="PF04954">
    <property type="entry name" value="SIP"/>
    <property type="match status" value="1"/>
</dbReference>
<dbReference type="SUPFAM" id="SSF63380">
    <property type="entry name" value="Riboflavin synthase domain-like"/>
    <property type="match status" value="1"/>
</dbReference>
<dbReference type="PROSITE" id="PS51384">
    <property type="entry name" value="FAD_FR"/>
    <property type="match status" value="1"/>
</dbReference>
<proteinExistence type="predicted"/>
<evidence type="ECO:0000255" key="1">
    <source>
        <dbReference type="PROSITE-ProRule" id="PRU00716"/>
    </source>
</evidence>
<reference key="1">
    <citation type="journal article" date="2003" name="Proc. Natl. Acad. Sci. U.S.A.">
        <title>The complete genome sequence of Mycobacterium bovis.</title>
        <authorList>
            <person name="Garnier T."/>
            <person name="Eiglmeier K."/>
            <person name="Camus J.-C."/>
            <person name="Medina N."/>
            <person name="Mansoor H."/>
            <person name="Pryor M."/>
            <person name="Duthoy S."/>
            <person name="Grondin S."/>
            <person name="Lacroix C."/>
            <person name="Monsempe C."/>
            <person name="Simon S."/>
            <person name="Harris B."/>
            <person name="Atkin R."/>
            <person name="Doggett J."/>
            <person name="Mayes R."/>
            <person name="Keating L."/>
            <person name="Wheeler P.R."/>
            <person name="Parkhill J."/>
            <person name="Barrell B.G."/>
            <person name="Cole S.T."/>
            <person name="Gordon S.V."/>
            <person name="Hewinson R.G."/>
        </authorList>
    </citation>
    <scope>NUCLEOTIDE SEQUENCE [LARGE SCALE GENOMIC DNA]</scope>
    <source>
        <strain>ATCC BAA-935 / AF2122/97</strain>
    </source>
</reference>
<reference key="2">
    <citation type="journal article" date="2017" name="Genome Announc.">
        <title>Updated reference genome sequence and annotation of Mycobacterium bovis AF2122/97.</title>
        <authorList>
            <person name="Malone K.M."/>
            <person name="Farrell D."/>
            <person name="Stuber T.P."/>
            <person name="Schubert O.T."/>
            <person name="Aebersold R."/>
            <person name="Robbe-Austerman S."/>
            <person name="Gordon S.V."/>
        </authorList>
    </citation>
    <scope>NUCLEOTIDE SEQUENCE [LARGE SCALE GENOMIC DNA]</scope>
    <scope>GENOME REANNOTATION</scope>
    <source>
        <strain>ATCC BAA-935 / AF2122/97</strain>
    </source>
</reference>
<organism>
    <name type="scientific">Mycobacterium bovis (strain ATCC BAA-935 / AF2122/97)</name>
    <dbReference type="NCBI Taxonomy" id="233413"/>
    <lineage>
        <taxon>Bacteria</taxon>
        <taxon>Bacillati</taxon>
        <taxon>Actinomycetota</taxon>
        <taxon>Actinomycetes</taxon>
        <taxon>Mycobacteriales</taxon>
        <taxon>Mycobacteriaceae</taxon>
        <taxon>Mycobacterium</taxon>
        <taxon>Mycobacterium tuberculosis complex</taxon>
    </lineage>
</organism>
<name>Y2919_MYCBO</name>
<protein>
    <recommendedName>
        <fullName>Uncharacterized protein Mb2919c</fullName>
    </recommendedName>
</protein>